<feature type="chain" id="PRO_0000232741" description="Membrane-associated phosphatidylinositol transfer protein 2">
    <location>
        <begin position="1"/>
        <end position="1349"/>
    </location>
</feature>
<feature type="domain" description="DDHD" evidence="2">
    <location>
        <begin position="715"/>
        <end position="963"/>
    </location>
</feature>
<feature type="region of interest" description="Disordered" evidence="3">
    <location>
        <begin position="262"/>
        <end position="344"/>
    </location>
</feature>
<feature type="region of interest" description="Disordered" evidence="3">
    <location>
        <begin position="618"/>
        <end position="671"/>
    </location>
</feature>
<feature type="region of interest" description="Disordered" evidence="3">
    <location>
        <begin position="876"/>
        <end position="900"/>
    </location>
</feature>
<feature type="region of interest" description="Disordered" evidence="3">
    <location>
        <begin position="1296"/>
        <end position="1326"/>
    </location>
</feature>
<feature type="compositionally biased region" description="Low complexity" evidence="3">
    <location>
        <begin position="302"/>
        <end position="322"/>
    </location>
</feature>
<feature type="compositionally biased region" description="Gly residues" evidence="3">
    <location>
        <begin position="618"/>
        <end position="631"/>
    </location>
</feature>
<feature type="compositionally biased region" description="Basic and acidic residues" evidence="3">
    <location>
        <begin position="653"/>
        <end position="667"/>
    </location>
</feature>
<feature type="compositionally biased region" description="Pro residues" evidence="3">
    <location>
        <begin position="878"/>
        <end position="888"/>
    </location>
</feature>
<feature type="modified residue" description="Phosphoserine" evidence="1">
    <location>
        <position position="337"/>
    </location>
</feature>
<feature type="modified residue" description="Phosphoserine" evidence="1">
    <location>
        <position position="341"/>
    </location>
</feature>
<feature type="modified residue" description="Phosphoserine" evidence="1">
    <location>
        <position position="368"/>
    </location>
</feature>
<feature type="modified residue" description="Phosphoserine" evidence="1">
    <location>
        <position position="589"/>
    </location>
</feature>
<feature type="modified residue" description="Phosphoserine" evidence="8">
    <location>
        <position position="644"/>
    </location>
</feature>
<feature type="modified residue" description="Phosphoserine" evidence="1">
    <location>
        <position position="700"/>
    </location>
</feature>
<feature type="modified residue" description="Phosphoserine" evidence="1">
    <location>
        <position position="701"/>
    </location>
</feature>
<feature type="modified residue" description="Phosphoserine" evidence="1">
    <location>
        <position position="702"/>
    </location>
</feature>
<feature type="modified residue" description="Omega-N-methylarginine" evidence="1">
    <location>
        <position position="828"/>
    </location>
</feature>
<feature type="modified residue" description="Phosphoserine" evidence="8">
    <location>
        <position position="1277"/>
    </location>
</feature>
<feature type="splice variant" id="VSP_017961" description="In isoform 3." evidence="7">
    <location>
        <begin position="50"/>
        <end position="328"/>
    </location>
</feature>
<feature type="splice variant" id="VSP_017962" description="In isoform 2." evidence="6">
    <original>A</original>
    <variation>VETVQRNPELVLEGGPLAPLPHGDGFLETSMPVPAPTWQDGPRPGCAES</variation>
    <location>
        <position position="802"/>
    </location>
</feature>
<feature type="splice variant" id="VSP_017963" description="In isoform 2." evidence="6">
    <original>KAPDALSHTPSVRRLSLLALPAPSPTTPGPHPPARKASPGLERAPGLPELDIGEV</original>
    <variation>I</variation>
    <location>
        <begin position="857"/>
        <end position="911"/>
    </location>
</feature>
<feature type="sequence variant" id="VAR_053584" description="In dbSNP:rs17884869.">
    <original>P</original>
    <variation>L</variation>
    <location>
        <position position="9"/>
    </location>
</feature>
<feature type="sequence variant" id="VAR_062131" description="In dbSNP:rs55813219.">
    <original>L</original>
    <variation>M</variation>
    <location>
        <position position="661"/>
    </location>
</feature>
<sequence length="1349" mass="148933">MIIKEYRIPLPMTVEEYRIAQLYMIQKKSRNETYGEGSGVEILENRPYTDGPGGSGQYTHKVYHVGMHIPSWFRSILPKAALRVVEESWNAYPYTRTRFTCPFVEKFSIDIETFYKTDAGENPDVFNLSPVEKNQLTIDFIDIVKDPVPHNEYKTEEDPKLFQSTKTQRGPLSENWIEEYKKQVFPIMCAYKLCKVEFRYWGMQSKIERFIHDTGLRRVMVRAHRQAWCWQDEWYGLSMENIRELEKEAQLMLSRKMAQFNEDGEEATELVKHEAVSDQTSGEPPEPSSSNGEPLVGRGLKKQWSTSSKSSRSSKRGASPSRHSISEWRMQSIARDSDESSDDEFFDAHEDLSDTEEMFPKDITKWSSNDLMDKIESPEPEDTQDGLYRQGAPEFRVASSVEQLNIIEDEVSQPLAAPPSKIHVLLLVLHGGTILDTGAGDPSSKKGDANTIANVFDTVMRVHYPSALGRLAIRLVPCPPVCSDAFALVSNLSPYSHDEGCLSSSQDHIPLAALPLLATSSPQYQEAVATVIQRANLAYGDFIKSQEGMTFNGQVCLIGDCVGGILAFDALCYSNQPVSESQSSSRRGSVVSMQDNDLLSPGILMNAAHCCGGGGGGGGGGGSSGGGGSSGGSSLESSRHLSRSNVDIPRSNGTEDPKRQLPRKRSDSSTYELDTIQQHQAFLSSLHASVLRTEPCSRHSSSSTMLDGTGALGRFDFEITDLFLFGCPLGLVLALRKTVIPALDVFQLRPACQQVYNLFHPADPSASRLEPLLERRFHALPPFSVPRYQRYPLGDGCSTLLADVLQTHNAAFQEHGAPSSPGTAPASRGFRRASEISIASQVSGMAESYTASSIAQKAPDALSHTPSVRRLSLLALPAPSPTTPGPHPPARKASPGLERAPGLPELDIGEVAAKWWGQKRIDYALYCPDALTAFPTVALPHLFHASYWESTDVVSFLLRQVMRHDNSSILELDGKEVSVFTPSKPREKWQRKRTHVKLRNVTANHRINDALANEDGPQVLTGRFMYGPLDMVTLTGEKVDVHIMTQPPSGEWLYLDTLVTNNSGRVSYTIPESHRLGVGVYPIKMVVRGDHTFADSYITVLPKGTEFVVFSIDGSFAASVSIMGSDPKVRAGAVDVVRHWQDLGYLIIYVTGRPDMQKQRVVAWLAQHNFPHGVVSFCDGLVHDPLRHKANFLKLLISELHLRVHAAYGSTKDVAVYSAISLSPMQIYIVGRPTKKLQQQCQFITDGYAAHLAQLKYSHRARPARNTATRMALRKGSFGLPGQGDFLRSRNHLLRTISAQPSGPSHRHERTQSQADGEQRGQRSMSVAAGCWGRAMTGRLEPGAAAGPK</sequence>
<accession>Q9BZ72</accession>
<accession>Q9P271</accession>
<protein>
    <recommendedName>
        <fullName>Membrane-associated phosphatidylinositol transfer protein 2</fullName>
    </recommendedName>
    <alternativeName>
        <fullName>Phosphatidylinositol transfer protein, membrane-associated 2</fullName>
        <shortName>PITPnm 2</shortName>
    </alternativeName>
    <alternativeName>
        <fullName>Pyk2 N-terminal domain-interacting receptor 3</fullName>
        <shortName>NIR-3</shortName>
    </alternativeName>
</protein>
<proteinExistence type="evidence at protein level"/>
<keyword id="KW-0025">Alternative splicing</keyword>
<keyword id="KW-0106">Calcium</keyword>
<keyword id="KW-0446">Lipid-binding</keyword>
<keyword id="KW-0472">Membrane</keyword>
<keyword id="KW-0479">Metal-binding</keyword>
<keyword id="KW-0488">Methylation</keyword>
<keyword id="KW-0597">Phosphoprotein</keyword>
<keyword id="KW-1267">Proteomics identification</keyword>
<keyword id="KW-1185">Reference proteome</keyword>
<evidence type="ECO:0000250" key="1">
    <source>
        <dbReference type="UniProtKB" id="Q6ZPQ6"/>
    </source>
</evidence>
<evidence type="ECO:0000255" key="2">
    <source>
        <dbReference type="PROSITE-ProRule" id="PRU00378"/>
    </source>
</evidence>
<evidence type="ECO:0000256" key="3">
    <source>
        <dbReference type="SAM" id="MobiDB-lite"/>
    </source>
</evidence>
<evidence type="ECO:0000269" key="4">
    <source>
    </source>
</evidence>
<evidence type="ECO:0000269" key="5">
    <source>
    </source>
</evidence>
<evidence type="ECO:0000303" key="6">
    <source>
    </source>
</evidence>
<evidence type="ECO:0000305" key="7"/>
<evidence type="ECO:0007744" key="8">
    <source>
    </source>
</evidence>
<comment type="function">
    <text evidence="4">Catalyzes the transfer of phosphatidylinositol and phosphatidylcholine between membranes (in vitro). Binds calcium ions.</text>
</comment>
<comment type="subunit">
    <text evidence="1 4">Interacts with PTK2B via its C-terminus (PubMed:10022914). Interacts with CPNE4 (via VWFA domain) (By similarity).</text>
</comment>
<comment type="subcellular location">
    <subcellularLocation>
        <location evidence="5">Endomembrane system</location>
        <topology evidence="5">Peripheral membrane protein</topology>
    </subcellularLocation>
</comment>
<comment type="alternative products">
    <event type="alternative splicing"/>
    <isoform>
        <id>Q9BZ72-1</id>
        <name>1</name>
        <sequence type="displayed"/>
    </isoform>
    <isoform>
        <id>Q9BZ72-2</id>
        <name>2</name>
        <sequence type="described" ref="VSP_017962 VSP_017963"/>
    </isoform>
    <isoform>
        <id>Q9BZ72-3</id>
        <name>3</name>
        <sequence type="described" ref="VSP_017961"/>
    </isoform>
</comment>
<comment type="tissue specificity">
    <text evidence="4">Highly expressed in brain, heart, ovary, testis and thymus. Detected in small intestine, prostate, pancreas, skeletal muscle, liver, colon and placenta.</text>
</comment>
<comment type="similarity">
    <text evidence="7">Belongs to the PtdIns transfer protein family. PI transfer class IIA subfamily.</text>
</comment>
<comment type="sequence caution" evidence="7">
    <conflict type="erroneous initiation">
        <sequence resource="EMBL-CDS" id="BAA95981"/>
    </conflict>
</comment>
<name>PITM2_HUMAN</name>
<dbReference type="EMBL" id="AF334585">
    <property type="protein sequence ID" value="AAK01445.1"/>
    <property type="molecule type" value="mRNA"/>
</dbReference>
<dbReference type="EMBL" id="AB040890">
    <property type="protein sequence ID" value="BAA95981.2"/>
    <property type="status" value="ALT_INIT"/>
    <property type="molecule type" value="mRNA"/>
</dbReference>
<dbReference type="CCDS" id="CCDS73543.1">
    <molecule id="Q9BZ72-2"/>
</dbReference>
<dbReference type="CCDS" id="CCDS9242.1">
    <molecule id="Q9BZ72-1"/>
</dbReference>
<dbReference type="RefSeq" id="NP_001287730.1">
    <molecule id="Q9BZ72-2"/>
    <property type="nucleotide sequence ID" value="NM_001300801.2"/>
</dbReference>
<dbReference type="RefSeq" id="NP_001371597.1">
    <molecule id="Q9BZ72-2"/>
    <property type="nucleotide sequence ID" value="NM_001384668.1"/>
</dbReference>
<dbReference type="RefSeq" id="NP_065896.1">
    <molecule id="Q9BZ72-1"/>
    <property type="nucleotide sequence ID" value="NM_020845.3"/>
</dbReference>
<dbReference type="RefSeq" id="XP_047285162.1">
    <molecule id="Q9BZ72-1"/>
    <property type="nucleotide sequence ID" value="XM_047429206.1"/>
</dbReference>
<dbReference type="RefSeq" id="XP_047285164.1">
    <molecule id="Q9BZ72-2"/>
    <property type="nucleotide sequence ID" value="XM_047429208.1"/>
</dbReference>
<dbReference type="SMR" id="Q9BZ72"/>
<dbReference type="BioGRID" id="121653">
    <property type="interactions" value="6"/>
</dbReference>
<dbReference type="CORUM" id="Q9BZ72"/>
<dbReference type="ELM" id="Q9BZ72"/>
<dbReference type="FunCoup" id="Q9BZ72">
    <property type="interactions" value="1484"/>
</dbReference>
<dbReference type="IntAct" id="Q9BZ72">
    <property type="interactions" value="5"/>
</dbReference>
<dbReference type="STRING" id="9606.ENSP00000322218"/>
<dbReference type="GlyGen" id="Q9BZ72">
    <property type="glycosylation" value="2 sites"/>
</dbReference>
<dbReference type="iPTMnet" id="Q9BZ72"/>
<dbReference type="PhosphoSitePlus" id="Q9BZ72"/>
<dbReference type="BioMuta" id="PITPNM2"/>
<dbReference type="DMDM" id="74717733"/>
<dbReference type="jPOST" id="Q9BZ72"/>
<dbReference type="MassIVE" id="Q9BZ72"/>
<dbReference type="PaxDb" id="9606-ENSP00000322218"/>
<dbReference type="PeptideAtlas" id="Q9BZ72"/>
<dbReference type="ProteomicsDB" id="79773">
    <molecule id="Q9BZ72-1"/>
</dbReference>
<dbReference type="ProteomicsDB" id="79774">
    <molecule id="Q9BZ72-2"/>
</dbReference>
<dbReference type="ProteomicsDB" id="79775">
    <molecule id="Q9BZ72-3"/>
</dbReference>
<dbReference type="Antibodypedia" id="1085">
    <property type="antibodies" value="73 antibodies from 14 providers"/>
</dbReference>
<dbReference type="DNASU" id="57605"/>
<dbReference type="Ensembl" id="ENST00000280562.9">
    <molecule id="Q9BZ72-2"/>
    <property type="protein sequence ID" value="ENSP00000280562.5"/>
    <property type="gene ID" value="ENSG00000090975.14"/>
</dbReference>
<dbReference type="Ensembl" id="ENST00000320201.10">
    <molecule id="Q9BZ72-1"/>
    <property type="protein sequence ID" value="ENSP00000322218.4"/>
    <property type="gene ID" value="ENSG00000090975.14"/>
</dbReference>
<dbReference type="GeneID" id="57605"/>
<dbReference type="KEGG" id="hsa:57605"/>
<dbReference type="MANE-Select" id="ENST00000320201.10">
    <property type="protein sequence ID" value="ENSP00000322218.4"/>
    <property type="RefSeq nucleotide sequence ID" value="NM_020845.3"/>
    <property type="RefSeq protein sequence ID" value="NP_065896.1"/>
</dbReference>
<dbReference type="UCSC" id="uc001uej.2">
    <molecule id="Q9BZ72-1"/>
    <property type="organism name" value="human"/>
</dbReference>
<dbReference type="AGR" id="HGNC:21044"/>
<dbReference type="CTD" id="57605"/>
<dbReference type="DisGeNET" id="57605"/>
<dbReference type="GeneCards" id="PITPNM2"/>
<dbReference type="HGNC" id="HGNC:21044">
    <property type="gene designation" value="PITPNM2"/>
</dbReference>
<dbReference type="HPA" id="ENSG00000090975">
    <property type="expression patterns" value="Tissue enriched (lymphoid)"/>
</dbReference>
<dbReference type="MIM" id="608920">
    <property type="type" value="gene"/>
</dbReference>
<dbReference type="neXtProt" id="NX_Q9BZ72"/>
<dbReference type="OpenTargets" id="ENSG00000090975"/>
<dbReference type="PharmGKB" id="PA134963002"/>
<dbReference type="VEuPathDB" id="HostDB:ENSG00000090975"/>
<dbReference type="eggNOG" id="KOG3668">
    <property type="taxonomic scope" value="Eukaryota"/>
</dbReference>
<dbReference type="GeneTree" id="ENSGT00940000153849"/>
<dbReference type="HOGENOM" id="CLU_007179_0_0_1"/>
<dbReference type="InParanoid" id="Q9BZ72"/>
<dbReference type="OMA" id="CWGRTMT"/>
<dbReference type="OrthoDB" id="10053061at2759"/>
<dbReference type="PAN-GO" id="Q9BZ72">
    <property type="GO annotations" value="5 GO annotations based on evolutionary models"/>
</dbReference>
<dbReference type="PhylomeDB" id="Q9BZ72"/>
<dbReference type="TreeFam" id="TF312967"/>
<dbReference type="PathwayCommons" id="Q9BZ72"/>
<dbReference type="Reactome" id="R-HSA-1483226">
    <property type="pathway name" value="Synthesis of PI"/>
</dbReference>
<dbReference type="SignaLink" id="Q9BZ72"/>
<dbReference type="BioGRID-ORCS" id="57605">
    <property type="hits" value="10 hits in 1167 CRISPR screens"/>
</dbReference>
<dbReference type="ChiTaRS" id="PITPNM2">
    <property type="organism name" value="human"/>
</dbReference>
<dbReference type="GenomeRNAi" id="57605"/>
<dbReference type="Pharos" id="Q9BZ72">
    <property type="development level" value="Tbio"/>
</dbReference>
<dbReference type="PRO" id="PR:Q9BZ72"/>
<dbReference type="Proteomes" id="UP000005640">
    <property type="component" value="Chromosome 12"/>
</dbReference>
<dbReference type="RNAct" id="Q9BZ72">
    <property type="molecule type" value="protein"/>
</dbReference>
<dbReference type="Bgee" id="ENSG00000090975">
    <property type="expression patterns" value="Expressed in metanephros cortex and 102 other cell types or tissues"/>
</dbReference>
<dbReference type="ExpressionAtlas" id="Q9BZ72">
    <property type="expression patterns" value="baseline and differential"/>
</dbReference>
<dbReference type="GO" id="GO:0005737">
    <property type="term" value="C:cytoplasm"/>
    <property type="evidence" value="ECO:0000318"/>
    <property type="project" value="GO_Central"/>
</dbReference>
<dbReference type="GO" id="GO:0005829">
    <property type="term" value="C:cytosol"/>
    <property type="evidence" value="ECO:0000304"/>
    <property type="project" value="Reactome"/>
</dbReference>
<dbReference type="GO" id="GO:0012505">
    <property type="term" value="C:endomembrane system"/>
    <property type="evidence" value="ECO:0007669"/>
    <property type="project" value="UniProtKB-SubCell"/>
</dbReference>
<dbReference type="GO" id="GO:0016020">
    <property type="term" value="C:membrane"/>
    <property type="evidence" value="ECO:0007669"/>
    <property type="project" value="UniProtKB-KW"/>
</dbReference>
<dbReference type="GO" id="GO:0005509">
    <property type="term" value="F:calcium ion binding"/>
    <property type="evidence" value="ECO:0000314"/>
    <property type="project" value="UniProtKB"/>
</dbReference>
<dbReference type="GO" id="GO:0031210">
    <property type="term" value="F:phosphatidylcholine binding"/>
    <property type="evidence" value="ECO:0000318"/>
    <property type="project" value="GO_Central"/>
</dbReference>
<dbReference type="GO" id="GO:0008525">
    <property type="term" value="F:phosphatidylcholine transporter activity"/>
    <property type="evidence" value="ECO:0000318"/>
    <property type="project" value="GO_Central"/>
</dbReference>
<dbReference type="GO" id="GO:0035091">
    <property type="term" value="F:phosphatidylinositol binding"/>
    <property type="evidence" value="ECO:0000318"/>
    <property type="project" value="GO_Central"/>
</dbReference>
<dbReference type="GO" id="GO:0008526">
    <property type="term" value="F:phosphatidylinositol transfer activity"/>
    <property type="evidence" value="ECO:0000314"/>
    <property type="project" value="UniProtKB"/>
</dbReference>
<dbReference type="GO" id="GO:0030971">
    <property type="term" value="F:receptor tyrosine kinase binding"/>
    <property type="evidence" value="ECO:0000315"/>
    <property type="project" value="UniProtKB"/>
</dbReference>
<dbReference type="GO" id="GO:0006661">
    <property type="term" value="P:phosphatidylinositol biosynthetic process"/>
    <property type="evidence" value="ECO:0000304"/>
    <property type="project" value="Reactome"/>
</dbReference>
<dbReference type="CDD" id="cd08889">
    <property type="entry name" value="SRPBCC_PITPNM1-2_like"/>
    <property type="match status" value="1"/>
</dbReference>
<dbReference type="FunFam" id="3.40.50.1000:FF:000173">
    <property type="entry name" value="Membrane-associated phosphatidylinositol transfer protein 2"/>
    <property type="match status" value="1"/>
</dbReference>
<dbReference type="FunFam" id="3.30.530.20:FF:000001">
    <property type="entry name" value="Phosphatidylinositol transfer protein membrane associated 2"/>
    <property type="match status" value="1"/>
</dbReference>
<dbReference type="Gene3D" id="3.30.530.20">
    <property type="match status" value="1"/>
</dbReference>
<dbReference type="Gene3D" id="3.40.50.1000">
    <property type="entry name" value="HAD superfamily/HAD-like"/>
    <property type="match status" value="1"/>
</dbReference>
<dbReference type="InterPro" id="IPR004177">
    <property type="entry name" value="DDHD_dom"/>
</dbReference>
<dbReference type="InterPro" id="IPR036412">
    <property type="entry name" value="HAD-like_sf"/>
</dbReference>
<dbReference type="InterPro" id="IPR023214">
    <property type="entry name" value="HAD_sf"/>
</dbReference>
<dbReference type="InterPro" id="IPR031315">
    <property type="entry name" value="LNS2/PITP"/>
</dbReference>
<dbReference type="InterPro" id="IPR001666">
    <property type="entry name" value="PI_transfer"/>
</dbReference>
<dbReference type="InterPro" id="IPR055261">
    <property type="entry name" value="PI_transfer_N"/>
</dbReference>
<dbReference type="InterPro" id="IPR023393">
    <property type="entry name" value="START-like_dom_sf"/>
</dbReference>
<dbReference type="PANTHER" id="PTHR10658:SF41">
    <property type="entry name" value="MEMBRANE-ASSOCIATED PHOSPHATIDYLINOSITOL TRANSFER PROTEIN 2"/>
    <property type="match status" value="1"/>
</dbReference>
<dbReference type="PANTHER" id="PTHR10658">
    <property type="entry name" value="PHOSPHATIDYLINOSITOL TRANSFER PROTEIN"/>
    <property type="match status" value="1"/>
</dbReference>
<dbReference type="Pfam" id="PF02862">
    <property type="entry name" value="DDHD"/>
    <property type="match status" value="1"/>
</dbReference>
<dbReference type="Pfam" id="PF02121">
    <property type="entry name" value="IP_trans"/>
    <property type="match status" value="1"/>
</dbReference>
<dbReference type="Pfam" id="PF24694">
    <property type="entry name" value="LNS2_PITM1-3"/>
    <property type="match status" value="1"/>
</dbReference>
<dbReference type="Pfam" id="PF24695">
    <property type="entry name" value="PITM1-3"/>
    <property type="match status" value="1"/>
</dbReference>
<dbReference type="PRINTS" id="PR00391">
    <property type="entry name" value="PITRANSFER"/>
</dbReference>
<dbReference type="SMART" id="SM01127">
    <property type="entry name" value="DDHD"/>
    <property type="match status" value="1"/>
</dbReference>
<dbReference type="SMART" id="SM00775">
    <property type="entry name" value="LNS2"/>
    <property type="match status" value="1"/>
</dbReference>
<dbReference type="SUPFAM" id="SSF55961">
    <property type="entry name" value="Bet v1-like"/>
    <property type="match status" value="1"/>
</dbReference>
<dbReference type="SUPFAM" id="SSF56784">
    <property type="entry name" value="HAD-like"/>
    <property type="match status" value="1"/>
</dbReference>
<dbReference type="PROSITE" id="PS51043">
    <property type="entry name" value="DDHD"/>
    <property type="match status" value="1"/>
</dbReference>
<organism>
    <name type="scientific">Homo sapiens</name>
    <name type="common">Human</name>
    <dbReference type="NCBI Taxonomy" id="9606"/>
    <lineage>
        <taxon>Eukaryota</taxon>
        <taxon>Metazoa</taxon>
        <taxon>Chordata</taxon>
        <taxon>Craniata</taxon>
        <taxon>Vertebrata</taxon>
        <taxon>Euteleostomi</taxon>
        <taxon>Mammalia</taxon>
        <taxon>Eutheria</taxon>
        <taxon>Euarchontoglires</taxon>
        <taxon>Primates</taxon>
        <taxon>Haplorrhini</taxon>
        <taxon>Catarrhini</taxon>
        <taxon>Hominidae</taxon>
        <taxon>Homo</taxon>
    </lineage>
</organism>
<gene>
    <name type="primary">PITPNM2</name>
    <name type="synonym">KIAA1457</name>
    <name type="synonym">NIR3</name>
</gene>
<reference key="1">
    <citation type="journal article" date="1999" name="Mol. Cell. Biol.">
        <title>Identification of a novel family of targets of PYK2 related to Drosophila retinal degeneration B (rdgB) protein.</title>
        <authorList>
            <person name="Lev S."/>
            <person name="Hernandez J."/>
            <person name="Martinez R."/>
            <person name="Chen A."/>
            <person name="Plowman G."/>
            <person name="Schlessinger J."/>
        </authorList>
    </citation>
    <scope>NUCLEOTIDE SEQUENCE [MRNA] (ISOFORM 1)</scope>
    <scope>FUNCTION</scope>
    <scope>ALTERNATIVE SPLICING (ISOFORMS 1 AND 3)</scope>
    <scope>INTERACTION WITH PTK2B</scope>
    <scope>CALCIUM-BINDING</scope>
    <scope>TISSUE SPECIFICITY</scope>
    <source>
        <tissue>Brain</tissue>
        <tissue>Heart</tissue>
    </source>
</reference>
<reference key="2">
    <citation type="journal article" date="2000" name="DNA Res.">
        <title>Prediction of the coding sequences of unidentified human genes. XVII. The complete sequences of 100 new cDNA clones from brain which code for large proteins in vitro.</title>
        <authorList>
            <person name="Nagase T."/>
            <person name="Kikuno R."/>
            <person name="Ishikawa K."/>
            <person name="Hirosawa M."/>
            <person name="Ohara O."/>
        </authorList>
    </citation>
    <scope>NUCLEOTIDE SEQUENCE [LARGE SCALE MRNA] (ISOFORM 2)</scope>
    <source>
        <tissue>Brain</tissue>
    </source>
</reference>
<reference key="3">
    <citation type="journal article" date="2012" name="J. Proteomics">
        <title>Systematic validation of antibody binding and protein subcellular localization using siRNA and confocal microscopy.</title>
        <authorList>
            <person name="Stadler C."/>
            <person name="Hjelmare M."/>
            <person name="Neumann B."/>
            <person name="Jonasson K."/>
            <person name="Pepperkok R."/>
            <person name="Uhlen M."/>
            <person name="Lundberg E."/>
        </authorList>
    </citation>
    <scope>SUBCELLULAR LOCATION</scope>
</reference>
<reference key="4">
    <citation type="journal article" date="2013" name="J. Proteome Res.">
        <title>Toward a comprehensive characterization of a human cancer cell phosphoproteome.</title>
        <authorList>
            <person name="Zhou H."/>
            <person name="Di Palma S."/>
            <person name="Preisinger C."/>
            <person name="Peng M."/>
            <person name="Polat A.N."/>
            <person name="Heck A.J."/>
            <person name="Mohammed S."/>
        </authorList>
    </citation>
    <scope>PHOSPHORYLATION [LARGE SCALE ANALYSIS] AT SER-644 AND SER-1277</scope>
    <scope>IDENTIFICATION BY MASS SPECTROMETRY [LARGE SCALE ANALYSIS]</scope>
    <source>
        <tissue>Cervix carcinoma</tissue>
        <tissue>Erythroleukemia</tissue>
    </source>
</reference>
<reference key="5">
    <citation type="journal article" date="2014" name="J. Proteomics">
        <title>An enzyme assisted RP-RPLC approach for in-depth analysis of human liver phosphoproteome.</title>
        <authorList>
            <person name="Bian Y."/>
            <person name="Song C."/>
            <person name="Cheng K."/>
            <person name="Dong M."/>
            <person name="Wang F."/>
            <person name="Huang J."/>
            <person name="Sun D."/>
            <person name="Wang L."/>
            <person name="Ye M."/>
            <person name="Zou H."/>
        </authorList>
    </citation>
    <scope>IDENTIFICATION BY MASS SPECTROMETRY [LARGE SCALE ANALYSIS]</scope>
    <source>
        <tissue>Liver</tissue>
    </source>
</reference>